<evidence type="ECO:0000250" key="1">
    <source>
        <dbReference type="UniProtKB" id="O95163"/>
    </source>
</evidence>
<evidence type="ECO:0000250" key="2">
    <source>
        <dbReference type="UniProtKB" id="Q06706"/>
    </source>
</evidence>
<evidence type="ECO:0000256" key="3">
    <source>
        <dbReference type="SAM" id="MobiDB-lite"/>
    </source>
</evidence>
<evidence type="ECO:0000305" key="4"/>
<comment type="function">
    <text evidence="1 2">Component of the elongator complex which is required for multiple tRNA modifications, including mcm5U (5-methoxycarbonylmethyl uridine), mcm5s2U (5-methoxycarbonylmethyl-2-thiouridine), and ncm5U (5-carbamoylmethyl uridine) (By similarity). The elongator complex catalyzes formation of carboxymethyluridine in the wobble base at position 34 in tRNAs (By similarity). ELP1 binds to tRNA, mediating interaction of the elongator complex with tRNA (By similarity).</text>
</comment>
<comment type="pathway">
    <text evidence="1">tRNA modification; 5-methoxycarbonylmethyl-2-thiouridine-tRNA biosynthesis.</text>
</comment>
<comment type="subunit">
    <text evidence="1">Homodimer. Component of the elongator complex.</text>
</comment>
<comment type="subcellular location">
    <subcellularLocation>
        <location evidence="1">Cytoplasm</location>
    </subcellularLocation>
    <subcellularLocation>
        <location evidence="1">Nucleus</location>
    </subcellularLocation>
</comment>
<comment type="similarity">
    <text evidence="4">Belongs to the ELP1/IKA1 family.</text>
</comment>
<comment type="caution">
    <text evidence="1">The elongator complex was originally thought to play a role in transcription elongation. However, it is no longer thought to play a direct role in this process and its primary function is thought to be in tRNA modification.</text>
</comment>
<dbReference type="EMBL" id="BC110776">
    <property type="protein sequence ID" value="AAI10777.1"/>
    <property type="molecule type" value="mRNA"/>
</dbReference>
<dbReference type="RefSeq" id="NP_001089940.1">
    <property type="nucleotide sequence ID" value="NM_001096471.1"/>
</dbReference>
<dbReference type="SMR" id="Q2TAQ1"/>
<dbReference type="DNASU" id="735009"/>
<dbReference type="GeneID" id="735009"/>
<dbReference type="KEGG" id="xla:735009"/>
<dbReference type="AGR" id="Xenbase:XB-GENE-5813405"/>
<dbReference type="CTD" id="735009"/>
<dbReference type="Xenbase" id="XB-GENE-5813405">
    <property type="gene designation" value="elp1.S"/>
</dbReference>
<dbReference type="OrthoDB" id="40048at2759"/>
<dbReference type="UniPathway" id="UPA00988"/>
<dbReference type="Proteomes" id="UP000186698">
    <property type="component" value="Chromosome 1S"/>
</dbReference>
<dbReference type="Bgee" id="735009">
    <property type="expression patterns" value="Expressed in muscle tissue and 19 other cell types or tissues"/>
</dbReference>
<dbReference type="GO" id="GO:0005737">
    <property type="term" value="C:cytoplasm"/>
    <property type="evidence" value="ECO:0000250"/>
    <property type="project" value="UniProtKB"/>
</dbReference>
<dbReference type="GO" id="GO:0005829">
    <property type="term" value="C:cytosol"/>
    <property type="evidence" value="ECO:0000318"/>
    <property type="project" value="GO_Central"/>
</dbReference>
<dbReference type="GO" id="GO:0033588">
    <property type="term" value="C:elongator holoenzyme complex"/>
    <property type="evidence" value="ECO:0000250"/>
    <property type="project" value="UniProtKB"/>
</dbReference>
<dbReference type="GO" id="GO:0005634">
    <property type="term" value="C:nucleus"/>
    <property type="evidence" value="ECO:0007669"/>
    <property type="project" value="UniProtKB-SubCell"/>
</dbReference>
<dbReference type="GO" id="GO:0000049">
    <property type="term" value="F:tRNA binding"/>
    <property type="evidence" value="ECO:0000318"/>
    <property type="project" value="GO_Central"/>
</dbReference>
<dbReference type="GO" id="GO:0002926">
    <property type="term" value="P:tRNA wobble base 5-methoxycarbonylmethyl-2-thiouridinylation"/>
    <property type="evidence" value="ECO:0000318"/>
    <property type="project" value="GO_Central"/>
</dbReference>
<dbReference type="InterPro" id="IPR056167">
    <property type="entry name" value="A-sol_ELP1"/>
</dbReference>
<dbReference type="InterPro" id="IPR006849">
    <property type="entry name" value="Elp1"/>
</dbReference>
<dbReference type="InterPro" id="IPR056165">
    <property type="entry name" value="ELP1_b-prop_2"/>
</dbReference>
<dbReference type="InterPro" id="IPR056164">
    <property type="entry name" value="ELP1_N_b-prop_1"/>
</dbReference>
<dbReference type="InterPro" id="IPR056169">
    <property type="entry name" value="HB_ELP1"/>
</dbReference>
<dbReference type="InterPro" id="IPR056166">
    <property type="entry name" value="TPR_ELP1"/>
</dbReference>
<dbReference type="PANTHER" id="PTHR12747">
    <property type="entry name" value="ELONGATOR COMPLEX PROTEIN 1"/>
    <property type="match status" value="1"/>
</dbReference>
<dbReference type="PANTHER" id="PTHR12747:SF0">
    <property type="entry name" value="ELONGATOR COMPLEX PROTEIN 1"/>
    <property type="match status" value="1"/>
</dbReference>
<dbReference type="Pfam" id="PF23925">
    <property type="entry name" value="A-sol_ELP1"/>
    <property type="match status" value="1"/>
</dbReference>
<dbReference type="Pfam" id="PF04762">
    <property type="entry name" value="Beta-prop_ELP1_1st"/>
    <property type="match status" value="1"/>
</dbReference>
<dbReference type="Pfam" id="PF23797">
    <property type="entry name" value="Beta-prop_ELP1_2nd"/>
    <property type="match status" value="1"/>
</dbReference>
<dbReference type="Pfam" id="PF23936">
    <property type="entry name" value="HB_ELP1"/>
    <property type="match status" value="1"/>
</dbReference>
<dbReference type="Pfam" id="PF23878">
    <property type="entry name" value="TPR_ELP1"/>
    <property type="match status" value="1"/>
</dbReference>
<dbReference type="PIRSF" id="PIRSF017233">
    <property type="entry name" value="IKAP"/>
    <property type="match status" value="1"/>
</dbReference>
<dbReference type="SUPFAM" id="SSF82171">
    <property type="entry name" value="DPP6 N-terminal domain-like"/>
    <property type="match status" value="1"/>
</dbReference>
<feature type="chain" id="PRO_0000283998" description="Putative elongator complex protein 1">
    <location>
        <begin position="1"/>
        <end position="1170"/>
    </location>
</feature>
<feature type="region of interest" description="Mediates dimerization" evidence="1">
    <location>
        <begin position="722"/>
        <end position="1170"/>
    </location>
</feature>
<feature type="region of interest" description="Disordered" evidence="3">
    <location>
        <begin position="1014"/>
        <end position="1045"/>
    </location>
</feature>
<feature type="region of interest" description="Required for binding to tRNA" evidence="2">
    <location>
        <begin position="1028"/>
        <end position="1046"/>
    </location>
</feature>
<feature type="compositionally biased region" description="Low complexity" evidence="3">
    <location>
        <begin position="1018"/>
        <end position="1030"/>
    </location>
</feature>
<feature type="compositionally biased region" description="Basic residues" evidence="3">
    <location>
        <begin position="1031"/>
        <end position="1043"/>
    </location>
</feature>
<name>ELP1_XENLA</name>
<proteinExistence type="evidence at transcript level"/>
<accession>Q2TAQ1</accession>
<reference key="1">
    <citation type="submission" date="2005-12" db="EMBL/GenBank/DDBJ databases">
        <authorList>
            <consortium name="NIH - Xenopus Gene Collection (XGC) project"/>
        </authorList>
    </citation>
    <scope>NUCLEOTIDE SEQUENCE [LARGE SCALE MRNA]</scope>
    <source>
        <tissue>Testis</tissue>
    </source>
</reference>
<sequence>MILVKANLSLLGGAKKETQFHGSEGKQAAQQKIMVVKPALPWDDHKPRITWRGDGQLFAVSSVCKESGTRKIRVWNRELALQSTSESIEGLEQALSWKPSGALIASSQSKPNKHSVIFFEKNGLVHGEFTLPFTKGQIKVKELLWNSDSTILAIWLEDNEKDESSSGCCVQLWTVGNYHWYLKQSLNFGTDEMKKIECLMWDPENAYRLHVFSTGWHYFCFDWFWGTDHSDGGQGDVAVIDGDKVLVTSFQQAVVPPPMSTYFIQLSCAVNEVTFQLEPKKNSGIAILDSTNILSIYRYGNSTVNDPTVKLGAVSGNGFRTSSQTPKLEKKLRLPRNACDVQLRSFRLLTWVQDDTFLAVSQESNSSISTVHHMNTDQMDGQDINVRDVGTITGHIISLCYSPNTKHCALQTSNGKIWKYLCEYPTPAVEPWIDSMGQEVKFPQPCVQTALASIEGEDMVIGLTERSRLFINNSEVASNITSFHLYEEFLLLTTHSHTCRCVSLRDTSLKALETQLNSASNPNDETIRKVERGSRIITVVPCDTKLILQMPRGNLETIHHRALVLAQIRKWLDRLLFKEAFECMRKLRINLNLLYDHNPKAFLDNVDLFIKQIGSVNYINLFLTEIKEEDVTKTMYPTHALSTMQSSEGAKAKKVDIVCDAVRAAMEKWDPQKFCLSILTSYVRRTIPQLEIALQKVHELRESPSTTIVSADEALKYLLFLVDVNELYDHSLGTYDFDLVVMVAEKSQKDPKEYLPFLNKLKKMETNYQRYTIDKHLKRYKKALSNLSKCGPDYFTEFLSFVKDQSLYTEALELYPHGTVEYKAINAAYGDHLVSKQQYELAGLIYARCNSIEKALDAFIASGNWHQVMCMASQLEYSGEKIAALARTVAGKLVEQRKQADAAVLLEQYAEDYEEAILLLLEGAHWEEALRLIYKYIRLDILETNLKPALLDAQRNHMILFDNQKTTFTRHKERLSVVREMKEKARLGLLDEDVTGCAEADLFSDTSSIMTASDASGKYSQSNSRISSRSSKNRRKAERKKHSLKEGSPLEDLALLEALAETIQMADKLRGDVHNLLKVLILFEYDARAKELQQNFDDLLLLFETSIPEIWPPSVQQNTAAPILGPHSTANSISISYQHQRNVNISMQDSELFTAPKLNKNIQWKLSLLL</sequence>
<organism>
    <name type="scientific">Xenopus laevis</name>
    <name type="common">African clawed frog</name>
    <dbReference type="NCBI Taxonomy" id="8355"/>
    <lineage>
        <taxon>Eukaryota</taxon>
        <taxon>Metazoa</taxon>
        <taxon>Chordata</taxon>
        <taxon>Craniata</taxon>
        <taxon>Vertebrata</taxon>
        <taxon>Euteleostomi</taxon>
        <taxon>Amphibia</taxon>
        <taxon>Batrachia</taxon>
        <taxon>Anura</taxon>
        <taxon>Pipoidea</taxon>
        <taxon>Pipidae</taxon>
        <taxon>Xenopodinae</taxon>
        <taxon>Xenopus</taxon>
        <taxon>Xenopus</taxon>
    </lineage>
</organism>
<gene>
    <name type="primary">elp1</name>
    <name type="synonym">ikbkap</name>
</gene>
<keyword id="KW-0963">Cytoplasm</keyword>
<keyword id="KW-0539">Nucleus</keyword>
<keyword id="KW-1185">Reference proteome</keyword>
<keyword id="KW-0819">tRNA processing</keyword>
<protein>
    <recommendedName>
        <fullName>Putative elongator complex protein 1</fullName>
        <shortName>ELP1</shortName>
    </recommendedName>
    <alternativeName>
        <fullName>IkappaB kinase complex-associated protein</fullName>
        <shortName>IKK complex-associated protein</shortName>
    </alternativeName>
</protein>